<organism>
    <name type="scientific">Rickettsia massiliae (strain Mtu5)</name>
    <dbReference type="NCBI Taxonomy" id="416276"/>
    <lineage>
        <taxon>Bacteria</taxon>
        <taxon>Pseudomonadati</taxon>
        <taxon>Pseudomonadota</taxon>
        <taxon>Alphaproteobacteria</taxon>
        <taxon>Rickettsiales</taxon>
        <taxon>Rickettsiaceae</taxon>
        <taxon>Rickettsieae</taxon>
        <taxon>Rickettsia</taxon>
        <taxon>spotted fever group</taxon>
    </lineage>
</organism>
<keyword id="KW-0030">Aminoacyl-tRNA synthetase</keyword>
<keyword id="KW-0067">ATP-binding</keyword>
<keyword id="KW-0963">Cytoplasm</keyword>
<keyword id="KW-0436">Ligase</keyword>
<keyword id="KW-0547">Nucleotide-binding</keyword>
<keyword id="KW-0648">Protein biosynthesis</keyword>
<feature type="chain" id="PRO_1000059056" description="Glycine--tRNA ligase alpha subunit">
    <location>
        <begin position="1"/>
        <end position="288"/>
    </location>
</feature>
<comment type="catalytic activity">
    <reaction evidence="1">
        <text>tRNA(Gly) + glycine + ATP = glycyl-tRNA(Gly) + AMP + diphosphate</text>
        <dbReference type="Rhea" id="RHEA:16013"/>
        <dbReference type="Rhea" id="RHEA-COMP:9664"/>
        <dbReference type="Rhea" id="RHEA-COMP:9683"/>
        <dbReference type="ChEBI" id="CHEBI:30616"/>
        <dbReference type="ChEBI" id="CHEBI:33019"/>
        <dbReference type="ChEBI" id="CHEBI:57305"/>
        <dbReference type="ChEBI" id="CHEBI:78442"/>
        <dbReference type="ChEBI" id="CHEBI:78522"/>
        <dbReference type="ChEBI" id="CHEBI:456215"/>
        <dbReference type="EC" id="6.1.1.14"/>
    </reaction>
</comment>
<comment type="subunit">
    <text evidence="1">Tetramer of two alpha and two beta subunits.</text>
</comment>
<comment type="subcellular location">
    <subcellularLocation>
        <location evidence="1">Cytoplasm</location>
    </subcellularLocation>
</comment>
<comment type="similarity">
    <text evidence="1">Belongs to the class-II aminoacyl-tRNA synthetase family.</text>
</comment>
<protein>
    <recommendedName>
        <fullName evidence="1">Glycine--tRNA ligase alpha subunit</fullName>
        <ecNumber evidence="1">6.1.1.14</ecNumber>
    </recommendedName>
    <alternativeName>
        <fullName evidence="1">Glycyl-tRNA synthetase alpha subunit</fullName>
        <shortName evidence="1">GlyRS</shortName>
    </alternativeName>
</protein>
<proteinExistence type="inferred from homology"/>
<evidence type="ECO:0000255" key="1">
    <source>
        <dbReference type="HAMAP-Rule" id="MF_00254"/>
    </source>
</evidence>
<reference key="1">
    <citation type="journal article" date="2007" name="Genome Res.">
        <title>Lateral gene transfer between obligate intracellular bacteria: evidence from the Rickettsia massiliae genome.</title>
        <authorList>
            <person name="Blanc G."/>
            <person name="Ogata H."/>
            <person name="Robert C."/>
            <person name="Audic S."/>
            <person name="Claverie J.-M."/>
            <person name="Raoult D."/>
        </authorList>
    </citation>
    <scope>NUCLEOTIDE SEQUENCE [LARGE SCALE GENOMIC DNA]</scope>
    <source>
        <strain>Mtu5</strain>
    </source>
</reference>
<sequence>MKKLSFQQIILTLQNYWQDYGCAILQPYDAHVGAGTFHPATVLRCLGTKPWSVAYVQPSRRPGDSRYGMHPNRMQHYYQFQVILKPSPDNIQELYLKSLECLGIDLKIHDIRFVEDDWESPTLGAAGLGWEVWCNGMEVSQFTYMQQIGGIECRPVAGEITYGLDRLALYIQGVDEVRELDWNGQVGEKALKYGEVDFEAERQFSKYNLELADSEMLLRHFKDSEDQCERLIKANLPMPAYDECLKASHAFNQLNALGVISVTERASYVLRVRHLARICCTKWLEMNK</sequence>
<accession>A8F2Z1</accession>
<dbReference type="EC" id="6.1.1.14" evidence="1"/>
<dbReference type="EMBL" id="CP000683">
    <property type="protein sequence ID" value="ABV85277.1"/>
    <property type="molecule type" value="Genomic_DNA"/>
</dbReference>
<dbReference type="RefSeq" id="WP_012153238.1">
    <property type="nucleotide sequence ID" value="NC_009900.1"/>
</dbReference>
<dbReference type="SMR" id="A8F2Z1"/>
<dbReference type="KEGG" id="rms:RMA_1337"/>
<dbReference type="HOGENOM" id="CLU_057066_1_0_5"/>
<dbReference type="Proteomes" id="UP000001311">
    <property type="component" value="Chromosome"/>
</dbReference>
<dbReference type="GO" id="GO:0005829">
    <property type="term" value="C:cytosol"/>
    <property type="evidence" value="ECO:0007669"/>
    <property type="project" value="TreeGrafter"/>
</dbReference>
<dbReference type="GO" id="GO:0005524">
    <property type="term" value="F:ATP binding"/>
    <property type="evidence" value="ECO:0007669"/>
    <property type="project" value="UniProtKB-UniRule"/>
</dbReference>
<dbReference type="GO" id="GO:0004820">
    <property type="term" value="F:glycine-tRNA ligase activity"/>
    <property type="evidence" value="ECO:0007669"/>
    <property type="project" value="UniProtKB-UniRule"/>
</dbReference>
<dbReference type="GO" id="GO:0006426">
    <property type="term" value="P:glycyl-tRNA aminoacylation"/>
    <property type="evidence" value="ECO:0007669"/>
    <property type="project" value="UniProtKB-UniRule"/>
</dbReference>
<dbReference type="FunFam" id="3.30.930.10:FF:000006">
    <property type="entry name" value="Glycine--tRNA ligase alpha subunit"/>
    <property type="match status" value="1"/>
</dbReference>
<dbReference type="Gene3D" id="3.30.930.10">
    <property type="entry name" value="Bira Bifunctional Protein, Domain 2"/>
    <property type="match status" value="1"/>
</dbReference>
<dbReference type="Gene3D" id="1.20.58.180">
    <property type="entry name" value="Class II aaRS and biotin synthetases, domain 2"/>
    <property type="match status" value="1"/>
</dbReference>
<dbReference type="HAMAP" id="MF_00254">
    <property type="entry name" value="Gly_tRNA_synth_alpha"/>
    <property type="match status" value="1"/>
</dbReference>
<dbReference type="InterPro" id="IPR045864">
    <property type="entry name" value="aa-tRNA-synth_II/BPL/LPL"/>
</dbReference>
<dbReference type="InterPro" id="IPR006194">
    <property type="entry name" value="Gly-tRNA-synth_heterodimer"/>
</dbReference>
<dbReference type="InterPro" id="IPR002310">
    <property type="entry name" value="Gly-tRNA_ligase_asu"/>
</dbReference>
<dbReference type="NCBIfam" id="TIGR00388">
    <property type="entry name" value="glyQ"/>
    <property type="match status" value="1"/>
</dbReference>
<dbReference type="NCBIfam" id="NF006827">
    <property type="entry name" value="PRK09348.1"/>
    <property type="match status" value="1"/>
</dbReference>
<dbReference type="PANTHER" id="PTHR30075:SF2">
    <property type="entry name" value="GLYCINE--TRNA LIGASE, CHLOROPLASTIC_MITOCHONDRIAL 2"/>
    <property type="match status" value="1"/>
</dbReference>
<dbReference type="PANTHER" id="PTHR30075">
    <property type="entry name" value="GLYCYL-TRNA SYNTHETASE"/>
    <property type="match status" value="1"/>
</dbReference>
<dbReference type="Pfam" id="PF02091">
    <property type="entry name" value="tRNA-synt_2e"/>
    <property type="match status" value="1"/>
</dbReference>
<dbReference type="PRINTS" id="PR01044">
    <property type="entry name" value="TRNASYNTHGA"/>
</dbReference>
<dbReference type="SUPFAM" id="SSF55681">
    <property type="entry name" value="Class II aaRS and biotin synthetases"/>
    <property type="match status" value="1"/>
</dbReference>
<dbReference type="PROSITE" id="PS50861">
    <property type="entry name" value="AA_TRNA_LIGASE_II_GLYAB"/>
    <property type="match status" value="1"/>
</dbReference>
<name>SYGA_RICM5</name>
<gene>
    <name evidence="1" type="primary">glyQ</name>
    <name type="ordered locus">RMA_1337</name>
</gene>